<accession>A0QBW0</accession>
<dbReference type="EC" id="2.1.1.182" evidence="1"/>
<dbReference type="EMBL" id="CP000479">
    <property type="protein sequence ID" value="ABK68498.1"/>
    <property type="molecule type" value="Genomic_DNA"/>
</dbReference>
<dbReference type="RefSeq" id="WP_011723970.1">
    <property type="nucleotide sequence ID" value="NC_008595.1"/>
</dbReference>
<dbReference type="SMR" id="A0QBW0"/>
<dbReference type="KEGG" id="mav:MAV_1148"/>
<dbReference type="HOGENOM" id="CLU_041220_1_1_11"/>
<dbReference type="Proteomes" id="UP000001574">
    <property type="component" value="Chromosome"/>
</dbReference>
<dbReference type="GO" id="GO:0005829">
    <property type="term" value="C:cytosol"/>
    <property type="evidence" value="ECO:0007669"/>
    <property type="project" value="TreeGrafter"/>
</dbReference>
<dbReference type="GO" id="GO:0052908">
    <property type="term" value="F:16S rRNA (adenine(1518)-N(6)/adenine(1519)-N(6))-dimethyltransferase activity"/>
    <property type="evidence" value="ECO:0007669"/>
    <property type="project" value="UniProtKB-EC"/>
</dbReference>
<dbReference type="GO" id="GO:0003723">
    <property type="term" value="F:RNA binding"/>
    <property type="evidence" value="ECO:0007669"/>
    <property type="project" value="UniProtKB-KW"/>
</dbReference>
<dbReference type="CDD" id="cd02440">
    <property type="entry name" value="AdoMet_MTases"/>
    <property type="match status" value="1"/>
</dbReference>
<dbReference type="FunFam" id="1.10.8.100:FF:000003">
    <property type="entry name" value="Ribosomal RNA small subunit methyltransferase A"/>
    <property type="match status" value="1"/>
</dbReference>
<dbReference type="FunFam" id="3.40.50.150:FF:000023">
    <property type="entry name" value="Ribosomal RNA small subunit methyltransferase A"/>
    <property type="match status" value="1"/>
</dbReference>
<dbReference type="Gene3D" id="1.10.8.100">
    <property type="entry name" value="Ribosomal RNA adenine dimethylase-like, domain 2"/>
    <property type="match status" value="1"/>
</dbReference>
<dbReference type="Gene3D" id="3.40.50.150">
    <property type="entry name" value="Vaccinia Virus protein VP39"/>
    <property type="match status" value="1"/>
</dbReference>
<dbReference type="HAMAP" id="MF_00607">
    <property type="entry name" value="16SrRNA_methyltr_A"/>
    <property type="match status" value="1"/>
</dbReference>
<dbReference type="InterPro" id="IPR001737">
    <property type="entry name" value="KsgA/Erm"/>
</dbReference>
<dbReference type="InterPro" id="IPR023165">
    <property type="entry name" value="rRNA_Ade_diMease-like_C"/>
</dbReference>
<dbReference type="InterPro" id="IPR020596">
    <property type="entry name" value="rRNA_Ade_Mease_Trfase_CS"/>
</dbReference>
<dbReference type="InterPro" id="IPR020598">
    <property type="entry name" value="rRNA_Ade_methylase_Trfase_N"/>
</dbReference>
<dbReference type="InterPro" id="IPR011530">
    <property type="entry name" value="rRNA_adenine_dimethylase"/>
</dbReference>
<dbReference type="InterPro" id="IPR029063">
    <property type="entry name" value="SAM-dependent_MTases_sf"/>
</dbReference>
<dbReference type="NCBIfam" id="TIGR00755">
    <property type="entry name" value="ksgA"/>
    <property type="match status" value="1"/>
</dbReference>
<dbReference type="PANTHER" id="PTHR11727">
    <property type="entry name" value="DIMETHYLADENOSINE TRANSFERASE"/>
    <property type="match status" value="1"/>
</dbReference>
<dbReference type="PANTHER" id="PTHR11727:SF7">
    <property type="entry name" value="DIMETHYLADENOSINE TRANSFERASE-RELATED"/>
    <property type="match status" value="1"/>
</dbReference>
<dbReference type="Pfam" id="PF00398">
    <property type="entry name" value="RrnaAD"/>
    <property type="match status" value="1"/>
</dbReference>
<dbReference type="SMART" id="SM00650">
    <property type="entry name" value="rADc"/>
    <property type="match status" value="1"/>
</dbReference>
<dbReference type="SUPFAM" id="SSF53335">
    <property type="entry name" value="S-adenosyl-L-methionine-dependent methyltransferases"/>
    <property type="match status" value="1"/>
</dbReference>
<dbReference type="PROSITE" id="PS01131">
    <property type="entry name" value="RRNA_A_DIMETH"/>
    <property type="match status" value="1"/>
</dbReference>
<dbReference type="PROSITE" id="PS51689">
    <property type="entry name" value="SAM_RNA_A_N6_MT"/>
    <property type="match status" value="1"/>
</dbReference>
<feature type="chain" id="PRO_1000056639" description="Ribosomal RNA small subunit methyltransferase A">
    <location>
        <begin position="1"/>
        <end position="318"/>
    </location>
</feature>
<feature type="region of interest" description="Disordered" evidence="2">
    <location>
        <begin position="296"/>
        <end position="318"/>
    </location>
</feature>
<feature type="compositionally biased region" description="Basic and acidic residues" evidence="2">
    <location>
        <begin position="296"/>
        <end position="305"/>
    </location>
</feature>
<feature type="binding site" evidence="1">
    <location>
        <position position="40"/>
    </location>
    <ligand>
        <name>S-adenosyl-L-methionine</name>
        <dbReference type="ChEBI" id="CHEBI:59789"/>
    </ligand>
</feature>
<feature type="binding site" evidence="1">
    <location>
        <position position="42"/>
    </location>
    <ligand>
        <name>S-adenosyl-L-methionine</name>
        <dbReference type="ChEBI" id="CHEBI:59789"/>
    </ligand>
</feature>
<feature type="binding site" evidence="1">
    <location>
        <position position="67"/>
    </location>
    <ligand>
        <name>S-adenosyl-L-methionine</name>
        <dbReference type="ChEBI" id="CHEBI:59789"/>
    </ligand>
</feature>
<feature type="binding site" evidence="1">
    <location>
        <position position="88"/>
    </location>
    <ligand>
        <name>S-adenosyl-L-methionine</name>
        <dbReference type="ChEBI" id="CHEBI:59789"/>
    </ligand>
</feature>
<feature type="binding site" evidence="1">
    <location>
        <position position="118"/>
    </location>
    <ligand>
        <name>S-adenosyl-L-methionine</name>
        <dbReference type="ChEBI" id="CHEBI:59789"/>
    </ligand>
</feature>
<feature type="binding site" evidence="1">
    <location>
        <position position="137"/>
    </location>
    <ligand>
        <name>S-adenosyl-L-methionine</name>
        <dbReference type="ChEBI" id="CHEBI:59789"/>
    </ligand>
</feature>
<name>RSMA_MYCA1</name>
<gene>
    <name evidence="1" type="primary">rsmA</name>
    <name evidence="1" type="synonym">ksgA</name>
    <name type="ordered locus">MAV_1148</name>
</gene>
<keyword id="KW-0963">Cytoplasm</keyword>
<keyword id="KW-0489">Methyltransferase</keyword>
<keyword id="KW-0694">RNA-binding</keyword>
<keyword id="KW-0698">rRNA processing</keyword>
<keyword id="KW-0949">S-adenosyl-L-methionine</keyword>
<keyword id="KW-0808">Transferase</keyword>
<proteinExistence type="inferred from homology"/>
<organism>
    <name type="scientific">Mycobacterium avium (strain 104)</name>
    <dbReference type="NCBI Taxonomy" id="243243"/>
    <lineage>
        <taxon>Bacteria</taxon>
        <taxon>Bacillati</taxon>
        <taxon>Actinomycetota</taxon>
        <taxon>Actinomycetes</taxon>
        <taxon>Mycobacteriales</taxon>
        <taxon>Mycobacteriaceae</taxon>
        <taxon>Mycobacterium</taxon>
        <taxon>Mycobacterium avium complex (MAC)</taxon>
    </lineage>
</organism>
<evidence type="ECO:0000255" key="1">
    <source>
        <dbReference type="HAMAP-Rule" id="MF_00607"/>
    </source>
</evidence>
<evidence type="ECO:0000256" key="2">
    <source>
        <dbReference type="SAM" id="MobiDB-lite"/>
    </source>
</evidence>
<protein>
    <recommendedName>
        <fullName evidence="1">Ribosomal RNA small subunit methyltransferase A</fullName>
        <ecNumber evidence="1">2.1.1.182</ecNumber>
    </recommendedName>
    <alternativeName>
        <fullName evidence="1">16S rRNA (adenine(1518)-N(6)/adenine(1519)-N(6))-dimethyltransferase</fullName>
    </alternativeName>
    <alternativeName>
        <fullName evidence="1">16S rRNA dimethyladenosine transferase</fullName>
    </alternativeName>
    <alternativeName>
        <fullName evidence="1">16S rRNA dimethylase</fullName>
    </alternativeName>
    <alternativeName>
        <fullName evidence="1">S-adenosylmethionine-6-N', N'-adenosyl(rRNA) dimethyltransferase</fullName>
    </alternativeName>
</protein>
<reference key="1">
    <citation type="submission" date="2006-10" db="EMBL/GenBank/DDBJ databases">
        <authorList>
            <person name="Fleischmann R.D."/>
            <person name="Dodson R.J."/>
            <person name="Haft D.H."/>
            <person name="Merkel J.S."/>
            <person name="Nelson W.C."/>
            <person name="Fraser C.M."/>
        </authorList>
    </citation>
    <scope>NUCLEOTIDE SEQUENCE [LARGE SCALE GENOMIC DNA]</scope>
    <source>
        <strain>104</strain>
    </source>
</reference>
<comment type="function">
    <text evidence="1">Specifically dimethylates two adjacent adenosines (A1518 and A1519) in the loop of a conserved hairpin near the 3'-end of 16S rRNA in the 30S particle. May play a critical role in biogenesis of 30S subunits.</text>
</comment>
<comment type="catalytic activity">
    <reaction evidence="1">
        <text>adenosine(1518)/adenosine(1519) in 16S rRNA + 4 S-adenosyl-L-methionine = N(6)-dimethyladenosine(1518)/N(6)-dimethyladenosine(1519) in 16S rRNA + 4 S-adenosyl-L-homocysteine + 4 H(+)</text>
        <dbReference type="Rhea" id="RHEA:19609"/>
        <dbReference type="Rhea" id="RHEA-COMP:10232"/>
        <dbReference type="Rhea" id="RHEA-COMP:10233"/>
        <dbReference type="ChEBI" id="CHEBI:15378"/>
        <dbReference type="ChEBI" id="CHEBI:57856"/>
        <dbReference type="ChEBI" id="CHEBI:59789"/>
        <dbReference type="ChEBI" id="CHEBI:74411"/>
        <dbReference type="ChEBI" id="CHEBI:74493"/>
        <dbReference type="EC" id="2.1.1.182"/>
    </reaction>
</comment>
<comment type="subcellular location">
    <subcellularLocation>
        <location evidence="1">Cytoplasm</location>
    </subcellularLocation>
</comment>
<comment type="similarity">
    <text evidence="1">Belongs to the class I-like SAM-binding methyltransferase superfamily. rRNA adenine N(6)-methyltransferase family. RsmA subfamily.</text>
</comment>
<sequence>MASVQRKSWCALTIRLLGRTEIRRLAKELEFRPRKSLGQNFVHDANTVRRVVSTSGVSRSDHVLEVGPGLGSLTLALLDRGAHVTAVEIDPVLAERLPHTVAEHSHSEIQRLTVLNRDVLTLRRDELAEPPTAVVANLPYNVAVPALLHLLAEFPSIRTVTVMVQAEVAERLAAEPGGKEYGVPSVKVRFFGRVRRCGMVSPTVFWPIPRVYSGLVRIDRYPTSPWPTDPAFRRQVFQLVDIAFGQRRKTCRNAFVDWAGSGNESADRLLAASIDPARRGETLSIDDFVRLLQRSADRGGSDREGTSPPTAGQGAPAC</sequence>